<comment type="function">
    <text evidence="1">Glucosidase involved in the degradation of cellulosic biomass. Has both alpha- and beta-glucosidase activity (By similarity).</text>
</comment>
<comment type="catalytic activity">
    <reaction>
        <text>Hydrolysis of terminal, non-reducing (1-&gt;4)-linked alpha-D-glucose residues with release of alpha-D-glucose.</text>
        <dbReference type="EC" id="3.2.1.20"/>
    </reaction>
</comment>
<comment type="catalytic activity">
    <reaction>
        <text>Hydrolysis of terminal, non-reducing beta-D-glucosyl residues with release of beta-D-glucose.</text>
        <dbReference type="EC" id="3.2.1.21"/>
    </reaction>
</comment>
<comment type="subcellular location">
    <subcellularLocation>
        <location evidence="1">Secreted</location>
    </subcellularLocation>
</comment>
<comment type="similarity">
    <text evidence="5">Belongs to the glycosyl hydrolase 31 family.</text>
</comment>
<sequence length="887" mass="99904">MLRSLLLLAPMVGAAVAATEPNSPACPGYRATNVREGHNSLTADLTLAGKPCNTYGTDLKNLKLLVEYQTDERLHVKIYDANEQVYQVPESVVPRVDGKGGSRKKSVLKFNFKANPFSFQVKRGREVLFDTSGSNLVFQDQYLNLRTSLPRDPNLYGLGEHTDPLRLTTTNYTRTLWNRDSYGIPENSNLYGSHPVYYDHRGEDGTHGVFLLNSNGMDIKIDKTKDGKQFLEYNALGGIFDFYFFNGDTPKDASIEYAKVAGLPAMQSYWSFGFHQCRYGYRDAFEVAEVVQNYTQAKIPLETMWTDIDYMDRRRVFTLDPDRFPLEKVRELVSYLHKHDQKYIVMVDPAVSVSDNKGFNDGMEQGVFMKHQNGSLYKGAVWPGVTAYPDWFHPDIQKYWDGQFNDFFSPEKGVDIDGLWIDMNEAANFCTYPCLDPEGYSIENNLPPAAPPVRPNPRPLPGFPDDFQPPAASKRSVAKGSKVGLPGRDLLNPRYQIRNDAGLISSKTINTDLIHAGEGYAEYDTHNLYGTMMSSASRQSMAQRRPAVRPLIITRSTFAGAGTHVGHWLGDNLADWKHYRISIAQMLSFASMFQVPMVGSDICGFGGDTNEELCARWARLGAFYPFFRNHNEITSIPQEFYRWESVAESARKAIEVRYKLLDYVYTAFHRQTQTGEPFLQPMFYMYPEDKNTFSNDMQFFYGDSILVSPVHDVSQTSVEAYFPKDIFYDWNTGDVLRGRGAKVTLSNISVTDIPIHIRGGSIVPIRSESAMTTVELRKKGFELLIAPGQDGTASGTLYLDDGDSLKQSASLELEFKYRKGNLQIKGKFGMHTDLKINAITLLGQTSVPRQVTLSRAGKADSKFDPARQSVTIKTDLSLNESSEIDIN</sequence>
<accession>A1CNK4</accession>
<protein>
    <recommendedName>
        <fullName>Probable alpha/beta-glucosidase agdC</fullName>
        <ecNumber>3.2.1.20</ecNumber>
        <ecNumber>3.2.1.21</ecNumber>
    </recommendedName>
</protein>
<dbReference type="EC" id="3.2.1.20"/>
<dbReference type="EC" id="3.2.1.21"/>
<dbReference type="EMBL" id="DS027059">
    <property type="protein sequence ID" value="EAW07225.1"/>
    <property type="molecule type" value="Genomic_DNA"/>
</dbReference>
<dbReference type="RefSeq" id="XP_001268651.1">
    <property type="nucleotide sequence ID" value="XM_001268650.1"/>
</dbReference>
<dbReference type="SMR" id="A1CNK4"/>
<dbReference type="STRING" id="344612.A1CNK4"/>
<dbReference type="GlyCosmos" id="A1CNK4">
    <property type="glycosylation" value="5 sites, No reported glycans"/>
</dbReference>
<dbReference type="EnsemblFungi" id="EAW07225">
    <property type="protein sequence ID" value="EAW07225"/>
    <property type="gene ID" value="ACLA_019300"/>
</dbReference>
<dbReference type="GeneID" id="4700931"/>
<dbReference type="KEGG" id="act:ACLA_019300"/>
<dbReference type="VEuPathDB" id="FungiDB:ACLA_019300"/>
<dbReference type="eggNOG" id="KOG1065">
    <property type="taxonomic scope" value="Eukaryota"/>
</dbReference>
<dbReference type="HOGENOM" id="CLU_000631_11_0_1"/>
<dbReference type="OMA" id="YKGAVWP"/>
<dbReference type="OrthoDB" id="5839090at2759"/>
<dbReference type="Proteomes" id="UP000006701">
    <property type="component" value="Unassembled WGS sequence"/>
</dbReference>
<dbReference type="GO" id="GO:0005576">
    <property type="term" value="C:extracellular region"/>
    <property type="evidence" value="ECO:0007669"/>
    <property type="project" value="UniProtKB-SubCell"/>
</dbReference>
<dbReference type="GO" id="GO:0004558">
    <property type="term" value="F:alpha-1,4-glucosidase activity"/>
    <property type="evidence" value="ECO:0007669"/>
    <property type="project" value="UniProtKB-EC"/>
</dbReference>
<dbReference type="GO" id="GO:0008422">
    <property type="term" value="F:beta-glucosidase activity"/>
    <property type="evidence" value="ECO:0007669"/>
    <property type="project" value="UniProtKB-EC"/>
</dbReference>
<dbReference type="GO" id="GO:0030246">
    <property type="term" value="F:carbohydrate binding"/>
    <property type="evidence" value="ECO:0007669"/>
    <property type="project" value="InterPro"/>
</dbReference>
<dbReference type="GO" id="GO:0071555">
    <property type="term" value="P:cell wall organization"/>
    <property type="evidence" value="ECO:0007669"/>
    <property type="project" value="UniProtKB-KW"/>
</dbReference>
<dbReference type="GO" id="GO:0000272">
    <property type="term" value="P:polysaccharide catabolic process"/>
    <property type="evidence" value="ECO:0007669"/>
    <property type="project" value="UniProtKB-KW"/>
</dbReference>
<dbReference type="CDD" id="cd06602">
    <property type="entry name" value="GH31_MGAM_SI_GAA"/>
    <property type="match status" value="1"/>
</dbReference>
<dbReference type="CDD" id="cd14752">
    <property type="entry name" value="GH31_N"/>
    <property type="match status" value="1"/>
</dbReference>
<dbReference type="Gene3D" id="3.20.20.80">
    <property type="entry name" value="Glycosidases"/>
    <property type="match status" value="1"/>
</dbReference>
<dbReference type="Gene3D" id="2.60.40.1760">
    <property type="entry name" value="glycosyl hydrolase (family 31)"/>
    <property type="match status" value="1"/>
</dbReference>
<dbReference type="Gene3D" id="2.60.40.1180">
    <property type="entry name" value="Golgi alpha-mannosidase II"/>
    <property type="match status" value="2"/>
</dbReference>
<dbReference type="InterPro" id="IPR011013">
    <property type="entry name" value="Gal_mutarotase_sf_dom"/>
</dbReference>
<dbReference type="InterPro" id="IPR030458">
    <property type="entry name" value="Glyco_hydro_31_AS"/>
</dbReference>
<dbReference type="InterPro" id="IPR048395">
    <property type="entry name" value="Glyco_hydro_31_C"/>
</dbReference>
<dbReference type="InterPro" id="IPR025887">
    <property type="entry name" value="Glyco_hydro_31_N_dom"/>
</dbReference>
<dbReference type="InterPro" id="IPR000322">
    <property type="entry name" value="Glyco_hydro_31_TIM"/>
</dbReference>
<dbReference type="InterPro" id="IPR013780">
    <property type="entry name" value="Glyco_hydro_b"/>
</dbReference>
<dbReference type="InterPro" id="IPR017853">
    <property type="entry name" value="Glycoside_hydrolase_SF"/>
</dbReference>
<dbReference type="PANTHER" id="PTHR22762">
    <property type="entry name" value="ALPHA-GLUCOSIDASE"/>
    <property type="match status" value="1"/>
</dbReference>
<dbReference type="PANTHER" id="PTHR22762:SF67">
    <property type="entry name" value="ALPHA_BETA-GLUCOSIDASE AGDC-RELATED"/>
    <property type="match status" value="1"/>
</dbReference>
<dbReference type="Pfam" id="PF13802">
    <property type="entry name" value="Gal_mutarotas_2"/>
    <property type="match status" value="1"/>
</dbReference>
<dbReference type="Pfam" id="PF01055">
    <property type="entry name" value="Glyco_hydro_31_2nd"/>
    <property type="match status" value="1"/>
</dbReference>
<dbReference type="Pfam" id="PF21365">
    <property type="entry name" value="Glyco_hydro_31_3rd"/>
    <property type="match status" value="1"/>
</dbReference>
<dbReference type="SUPFAM" id="SSF51445">
    <property type="entry name" value="(Trans)glycosidases"/>
    <property type="match status" value="1"/>
</dbReference>
<dbReference type="SUPFAM" id="SSF74650">
    <property type="entry name" value="Galactose mutarotase-like"/>
    <property type="match status" value="1"/>
</dbReference>
<dbReference type="SUPFAM" id="SSF51011">
    <property type="entry name" value="Glycosyl hydrolase domain"/>
    <property type="match status" value="1"/>
</dbReference>
<dbReference type="PROSITE" id="PS00129">
    <property type="entry name" value="GLYCOSYL_HYDROL_F31_1"/>
    <property type="match status" value="1"/>
</dbReference>
<reference key="1">
    <citation type="journal article" date="2008" name="PLoS Genet.">
        <title>Genomic islands in the pathogenic filamentous fungus Aspergillus fumigatus.</title>
        <authorList>
            <person name="Fedorova N.D."/>
            <person name="Khaldi N."/>
            <person name="Joardar V.S."/>
            <person name="Maiti R."/>
            <person name="Amedeo P."/>
            <person name="Anderson M.J."/>
            <person name="Crabtree J."/>
            <person name="Silva J.C."/>
            <person name="Badger J.H."/>
            <person name="Albarraq A."/>
            <person name="Angiuoli S."/>
            <person name="Bussey H."/>
            <person name="Bowyer P."/>
            <person name="Cotty P.J."/>
            <person name="Dyer P.S."/>
            <person name="Egan A."/>
            <person name="Galens K."/>
            <person name="Fraser-Liggett C.M."/>
            <person name="Haas B.J."/>
            <person name="Inman J.M."/>
            <person name="Kent R."/>
            <person name="Lemieux S."/>
            <person name="Malavazi I."/>
            <person name="Orvis J."/>
            <person name="Roemer T."/>
            <person name="Ronning C.M."/>
            <person name="Sundaram J.P."/>
            <person name="Sutton G."/>
            <person name="Turner G."/>
            <person name="Venter J.C."/>
            <person name="White O.R."/>
            <person name="Whitty B.R."/>
            <person name="Youngman P."/>
            <person name="Wolfe K.H."/>
            <person name="Goldman G.H."/>
            <person name="Wortman J.R."/>
            <person name="Jiang B."/>
            <person name="Denning D.W."/>
            <person name="Nierman W.C."/>
        </authorList>
    </citation>
    <scope>NUCLEOTIDE SEQUENCE [LARGE SCALE GENOMIC DNA]</scope>
    <source>
        <strain>ATCC 1007 / CBS 513.65 / DSM 816 / NCTC 3887 / NRRL 1 / QM 1276 / 107</strain>
    </source>
</reference>
<keyword id="KW-0119">Carbohydrate metabolism</keyword>
<keyword id="KW-0961">Cell wall biogenesis/degradation</keyword>
<keyword id="KW-0325">Glycoprotein</keyword>
<keyword id="KW-0326">Glycosidase</keyword>
<keyword id="KW-0378">Hydrolase</keyword>
<keyword id="KW-0624">Polysaccharide degradation</keyword>
<keyword id="KW-1185">Reference proteome</keyword>
<keyword id="KW-0964">Secreted</keyword>
<keyword id="KW-0732">Signal</keyword>
<proteinExistence type="inferred from homology"/>
<evidence type="ECO:0000250" key="1"/>
<evidence type="ECO:0000255" key="2"/>
<evidence type="ECO:0000255" key="3">
    <source>
        <dbReference type="PROSITE-ProRule" id="PRU10066"/>
    </source>
</evidence>
<evidence type="ECO:0000256" key="4">
    <source>
        <dbReference type="SAM" id="MobiDB-lite"/>
    </source>
</evidence>
<evidence type="ECO:0000305" key="5"/>
<feature type="signal peptide" evidence="2">
    <location>
        <begin position="1"/>
        <end position="17"/>
    </location>
</feature>
<feature type="chain" id="PRO_0000394913" description="Probable alpha/beta-glucosidase agdC">
    <location>
        <begin position="18"/>
        <end position="887"/>
    </location>
</feature>
<feature type="region of interest" description="Disordered" evidence="4">
    <location>
        <begin position="457"/>
        <end position="483"/>
    </location>
</feature>
<feature type="active site" description="Nucleophile" evidence="3">
    <location>
        <position position="422"/>
    </location>
</feature>
<feature type="active site" evidence="1">
    <location>
        <position position="425"/>
    </location>
</feature>
<feature type="active site" description="Proton donor" evidence="1">
    <location>
        <position position="571"/>
    </location>
</feature>
<feature type="glycosylation site" description="N-linked (GlcNAc...) asparagine" evidence="2">
    <location>
        <position position="171"/>
    </location>
</feature>
<feature type="glycosylation site" description="N-linked (GlcNAc...) asparagine" evidence="2">
    <location>
        <position position="293"/>
    </location>
</feature>
<feature type="glycosylation site" description="N-linked (GlcNAc...) asparagine" evidence="2">
    <location>
        <position position="373"/>
    </location>
</feature>
<feature type="glycosylation site" description="N-linked (GlcNAc...) asparagine" evidence="2">
    <location>
        <position position="747"/>
    </location>
</feature>
<feature type="glycosylation site" description="N-linked (GlcNAc...) asparagine" evidence="2">
    <location>
        <position position="879"/>
    </location>
</feature>
<name>AGDC_ASPCL</name>
<gene>
    <name type="primary">agdC</name>
    <name type="ORF">ACLA_019300</name>
</gene>
<organism>
    <name type="scientific">Aspergillus clavatus (strain ATCC 1007 / CBS 513.65 / DSM 816 / NCTC 3887 / NRRL 1 / QM 1276 / 107)</name>
    <dbReference type="NCBI Taxonomy" id="344612"/>
    <lineage>
        <taxon>Eukaryota</taxon>
        <taxon>Fungi</taxon>
        <taxon>Dikarya</taxon>
        <taxon>Ascomycota</taxon>
        <taxon>Pezizomycotina</taxon>
        <taxon>Eurotiomycetes</taxon>
        <taxon>Eurotiomycetidae</taxon>
        <taxon>Eurotiales</taxon>
        <taxon>Aspergillaceae</taxon>
        <taxon>Aspergillus</taxon>
        <taxon>Aspergillus subgen. Fumigati</taxon>
    </lineage>
</organism>